<comment type="function">
    <text evidence="1">May play a role in DNA repair. It seems to be involved in an RecBC-independent recombinational process of DNA repair. It may act with RecF and RecO.</text>
</comment>
<comment type="similarity">
    <text evidence="1">Belongs to the RecR family.</text>
</comment>
<proteinExistence type="inferred from homology"/>
<evidence type="ECO:0000255" key="1">
    <source>
        <dbReference type="HAMAP-Rule" id="MF_00017"/>
    </source>
</evidence>
<organism>
    <name type="scientific">Streptomyces coelicolor (strain ATCC BAA-471 / A3(2) / M145)</name>
    <dbReference type="NCBI Taxonomy" id="100226"/>
    <lineage>
        <taxon>Bacteria</taxon>
        <taxon>Bacillati</taxon>
        <taxon>Actinomycetota</taxon>
        <taxon>Actinomycetes</taxon>
        <taxon>Kitasatosporales</taxon>
        <taxon>Streptomycetaceae</taxon>
        <taxon>Streptomyces</taxon>
        <taxon>Streptomyces albidoflavus group</taxon>
    </lineage>
</organism>
<protein>
    <recommendedName>
        <fullName evidence="1">Recombination protein RecR</fullName>
    </recommendedName>
</protein>
<dbReference type="EMBL" id="AF151381">
    <property type="protein sequence ID" value="AAD34032.2"/>
    <property type="molecule type" value="Genomic_DNA"/>
</dbReference>
<dbReference type="EMBL" id="AL939117">
    <property type="protein sequence ID" value="CAB45485.1"/>
    <property type="molecule type" value="Genomic_DNA"/>
</dbReference>
<dbReference type="PIR" id="T35386">
    <property type="entry name" value="T35386"/>
</dbReference>
<dbReference type="RefSeq" id="NP_627813.1">
    <property type="nucleotide sequence ID" value="NC_003888.3"/>
</dbReference>
<dbReference type="RefSeq" id="WP_003975321.1">
    <property type="nucleotide sequence ID" value="NZ_VNID01000003.1"/>
</dbReference>
<dbReference type="SMR" id="Q9XAI4"/>
<dbReference type="FunCoup" id="Q9XAI4">
    <property type="interactions" value="42"/>
</dbReference>
<dbReference type="STRING" id="100226.gene:17761241"/>
<dbReference type="PaxDb" id="100226-SCO3618"/>
<dbReference type="GeneID" id="91385441"/>
<dbReference type="KEGG" id="sco:SCO3618"/>
<dbReference type="PATRIC" id="fig|100226.15.peg.3676"/>
<dbReference type="eggNOG" id="COG0353">
    <property type="taxonomic scope" value="Bacteria"/>
</dbReference>
<dbReference type="HOGENOM" id="CLU_060739_1_0_11"/>
<dbReference type="InParanoid" id="Q9XAI4"/>
<dbReference type="OrthoDB" id="9802672at2"/>
<dbReference type="PhylomeDB" id="Q9XAI4"/>
<dbReference type="Proteomes" id="UP000001973">
    <property type="component" value="Chromosome"/>
</dbReference>
<dbReference type="GO" id="GO:0003677">
    <property type="term" value="F:DNA binding"/>
    <property type="evidence" value="ECO:0007669"/>
    <property type="project" value="UniProtKB-UniRule"/>
</dbReference>
<dbReference type="GO" id="GO:0008270">
    <property type="term" value="F:zinc ion binding"/>
    <property type="evidence" value="ECO:0007669"/>
    <property type="project" value="UniProtKB-KW"/>
</dbReference>
<dbReference type="GO" id="GO:0006302">
    <property type="term" value="P:double-strand break repair"/>
    <property type="evidence" value="ECO:0000318"/>
    <property type="project" value="GO_Central"/>
</dbReference>
<dbReference type="GO" id="GO:0000725">
    <property type="term" value="P:recombinational repair"/>
    <property type="evidence" value="ECO:0000318"/>
    <property type="project" value="GO_Central"/>
</dbReference>
<dbReference type="CDD" id="cd01025">
    <property type="entry name" value="TOPRIM_recR"/>
    <property type="match status" value="1"/>
</dbReference>
<dbReference type="Gene3D" id="3.40.1360.10">
    <property type="match status" value="1"/>
</dbReference>
<dbReference type="Gene3D" id="6.10.250.240">
    <property type="match status" value="1"/>
</dbReference>
<dbReference type="Gene3D" id="1.10.8.420">
    <property type="entry name" value="RecR Domain 1"/>
    <property type="match status" value="1"/>
</dbReference>
<dbReference type="HAMAP" id="MF_00017">
    <property type="entry name" value="RecR"/>
    <property type="match status" value="1"/>
</dbReference>
<dbReference type="InterPro" id="IPR000093">
    <property type="entry name" value="DNA_Rcmb_RecR"/>
</dbReference>
<dbReference type="InterPro" id="IPR023627">
    <property type="entry name" value="Rcmb_RecR"/>
</dbReference>
<dbReference type="InterPro" id="IPR015967">
    <property type="entry name" value="Rcmb_RecR_Znf"/>
</dbReference>
<dbReference type="InterPro" id="IPR006171">
    <property type="entry name" value="TOPRIM_dom"/>
</dbReference>
<dbReference type="InterPro" id="IPR034137">
    <property type="entry name" value="TOPRIM_RecR"/>
</dbReference>
<dbReference type="NCBIfam" id="TIGR00615">
    <property type="entry name" value="recR"/>
    <property type="match status" value="1"/>
</dbReference>
<dbReference type="PANTHER" id="PTHR30446">
    <property type="entry name" value="RECOMBINATION PROTEIN RECR"/>
    <property type="match status" value="1"/>
</dbReference>
<dbReference type="PANTHER" id="PTHR30446:SF0">
    <property type="entry name" value="RECOMBINATION PROTEIN RECR"/>
    <property type="match status" value="1"/>
</dbReference>
<dbReference type="Pfam" id="PF21175">
    <property type="entry name" value="RecR_C"/>
    <property type="match status" value="1"/>
</dbReference>
<dbReference type="Pfam" id="PF21176">
    <property type="entry name" value="RecR_HhH"/>
    <property type="match status" value="1"/>
</dbReference>
<dbReference type="Pfam" id="PF02132">
    <property type="entry name" value="RecR_ZnF"/>
    <property type="match status" value="1"/>
</dbReference>
<dbReference type="Pfam" id="PF13662">
    <property type="entry name" value="Toprim_4"/>
    <property type="match status" value="1"/>
</dbReference>
<dbReference type="SMART" id="SM00493">
    <property type="entry name" value="TOPRIM"/>
    <property type="match status" value="1"/>
</dbReference>
<dbReference type="SUPFAM" id="SSF111304">
    <property type="entry name" value="Recombination protein RecR"/>
    <property type="match status" value="1"/>
</dbReference>
<dbReference type="PROSITE" id="PS01300">
    <property type="entry name" value="RECR"/>
    <property type="match status" value="1"/>
</dbReference>
<dbReference type="PROSITE" id="PS50880">
    <property type="entry name" value="TOPRIM"/>
    <property type="match status" value="1"/>
</dbReference>
<name>RECR_STRCO</name>
<sequence>MYEGVVQDLIDELGRLPGVGPKSAQRIAFHILQAEPVDVRRLAQALMEVKAKVRFCATCGNVAQEEQCNICRDTRRDPSVICVVEEPKDVVAIERTREFRGRYHVLGGAISPIDGVGPDDLRIRELLARLADGSVTELILATDPNLEGEATATYLARMIKPMGLKVTRLASGLPVGGDLEYADEVTLGRAFEGRRLLDV</sequence>
<keyword id="KW-0227">DNA damage</keyword>
<keyword id="KW-0233">DNA recombination</keyword>
<keyword id="KW-0234">DNA repair</keyword>
<keyword id="KW-0479">Metal-binding</keyword>
<keyword id="KW-1185">Reference proteome</keyword>
<keyword id="KW-0862">Zinc</keyword>
<keyword id="KW-0863">Zinc-finger</keyword>
<gene>
    <name evidence="1" type="primary">recR</name>
    <name type="ordered locus">SCO3618</name>
    <name type="ORF">SC66T3.29c</name>
</gene>
<accession>Q9XAI4</accession>
<feature type="chain" id="PRO_0000190396" description="Recombination protein RecR">
    <location>
        <begin position="1"/>
        <end position="199"/>
    </location>
</feature>
<feature type="domain" description="Toprim" evidence="1">
    <location>
        <begin position="79"/>
        <end position="174"/>
    </location>
</feature>
<feature type="zinc finger region" description="C4-type" evidence="1">
    <location>
        <begin position="56"/>
        <end position="71"/>
    </location>
</feature>
<reference key="1">
    <citation type="submission" date="1999-08" db="EMBL/GenBank/DDBJ databases">
        <title>Nucleotide sequence analysis and genetic characterization of the recR gene of Streptomyces.</title>
        <authorList>
            <person name="Pelaez A.I."/>
            <person name="Ribas-Aparicio R.M."/>
            <person name="Gomez A."/>
            <person name="Rodicio M.R."/>
        </authorList>
    </citation>
    <scope>NUCLEOTIDE SEQUENCE [GENOMIC DNA]</scope>
    <source>
        <strain>A3(2) / NRRL B-16638</strain>
    </source>
</reference>
<reference key="2">
    <citation type="journal article" date="2002" name="Nature">
        <title>Complete genome sequence of the model actinomycete Streptomyces coelicolor A3(2).</title>
        <authorList>
            <person name="Bentley S.D."/>
            <person name="Chater K.F."/>
            <person name="Cerdeno-Tarraga A.-M."/>
            <person name="Challis G.L."/>
            <person name="Thomson N.R."/>
            <person name="James K.D."/>
            <person name="Harris D.E."/>
            <person name="Quail M.A."/>
            <person name="Kieser H."/>
            <person name="Harper D."/>
            <person name="Bateman A."/>
            <person name="Brown S."/>
            <person name="Chandra G."/>
            <person name="Chen C.W."/>
            <person name="Collins M."/>
            <person name="Cronin A."/>
            <person name="Fraser A."/>
            <person name="Goble A."/>
            <person name="Hidalgo J."/>
            <person name="Hornsby T."/>
            <person name="Howarth S."/>
            <person name="Huang C.-H."/>
            <person name="Kieser T."/>
            <person name="Larke L."/>
            <person name="Murphy L.D."/>
            <person name="Oliver K."/>
            <person name="O'Neil S."/>
            <person name="Rabbinowitsch E."/>
            <person name="Rajandream M.A."/>
            <person name="Rutherford K.M."/>
            <person name="Rutter S."/>
            <person name="Seeger K."/>
            <person name="Saunders D."/>
            <person name="Sharp S."/>
            <person name="Squares R."/>
            <person name="Squares S."/>
            <person name="Taylor K."/>
            <person name="Warren T."/>
            <person name="Wietzorrek A."/>
            <person name="Woodward J.R."/>
            <person name="Barrell B.G."/>
            <person name="Parkhill J."/>
            <person name="Hopwood D.A."/>
        </authorList>
    </citation>
    <scope>NUCLEOTIDE SEQUENCE [LARGE SCALE GENOMIC DNA]</scope>
    <source>
        <strain>ATCC BAA-471 / A3(2) / M145</strain>
    </source>
</reference>